<name>HMUD2_BPSAV</name>
<dbReference type="EMBL" id="FQ312032">
    <property type="protein sequence ID" value="CBW38062.1"/>
    <property type="molecule type" value="Genomic_DNA"/>
</dbReference>
<dbReference type="Proteomes" id="UP000000339">
    <property type="component" value="Segment"/>
</dbReference>
<dbReference type="GO" id="GO:0099018">
    <property type="term" value="P:symbiont-mediated evasion of host restriction-modification system"/>
    <property type="evidence" value="ECO:0007669"/>
    <property type="project" value="UniProtKB-KW"/>
</dbReference>
<dbReference type="GO" id="GO:0052170">
    <property type="term" value="P:symbiont-mediated suppression of host innate immune response"/>
    <property type="evidence" value="ECO:0007669"/>
    <property type="project" value="UniProtKB-KW"/>
</dbReference>
<dbReference type="InterPro" id="IPR041021">
    <property type="entry name" value="HMUD2"/>
</dbReference>
<dbReference type="InterPro" id="IPR027417">
    <property type="entry name" value="P-loop_NTPase"/>
</dbReference>
<dbReference type="Pfam" id="PF18747">
    <property type="entry name" value="HMUD2"/>
    <property type="match status" value="1"/>
</dbReference>
<dbReference type="SUPFAM" id="SSF52540">
    <property type="entry name" value="P-loop containing nucleoside triphosphate hydrolases"/>
    <property type="match status" value="1"/>
</dbReference>
<reference key="1">
    <citation type="journal article" date="2010" name="J. Bacteriol.">
        <title>A conserved acetyl esterase domain targets diverse bacteriophages to the Vi capsular receptor of Salmonella enterica serovar Typhi.</title>
        <authorList>
            <person name="Pickard D."/>
            <person name="Toribio A.L."/>
            <person name="Petty N.K."/>
            <person name="van Tonder A."/>
            <person name="Yu L."/>
            <person name="Goulding D."/>
            <person name="Barrell B."/>
            <person name="Rance R."/>
            <person name="Harris D."/>
            <person name="Wetter M."/>
            <person name="Wain J."/>
            <person name="Choudhary J."/>
            <person name="Thomson N."/>
            <person name="Dougan G."/>
        </authorList>
    </citation>
    <scope>NUCLEOTIDE SEQUENCE [LARGE SCALE GENOMIC DNA]</scope>
</reference>
<reference key="2">
    <citation type="journal article" date="2018" name="Proc. Natl. Acad. Sci. U.S.A.">
        <title>Identification and biosynthesis of thymidine hypermodifications in the genomic DNA of widespread bacterial viruses.</title>
        <authorList>
            <person name="Lee Y.J."/>
            <person name="Dai N."/>
            <person name="Walsh S.E."/>
            <person name="Mueller S."/>
            <person name="Fraser M.E."/>
            <person name="Kauffman K.M."/>
            <person name="Guan C."/>
            <person name="Correa I.R. Jr."/>
            <person name="Weigele P.R."/>
        </authorList>
    </citation>
    <scope>FUNCTION</scope>
</reference>
<reference key="3">
    <citation type="journal article" date="2021" name="Nucleic Acids Res.">
        <title>Pathways of thymidine hypermodification.</title>
        <authorList>
            <person name="Lee Y.J."/>
            <person name="Dai N."/>
            <person name="Mueller S.I."/>
            <person name="Guan C."/>
            <person name="Parker M.J."/>
            <person name="Fraser M.E."/>
            <person name="Walsh S.E."/>
            <person name="Sridar J."/>
            <person name="Mulholland A."/>
            <person name="Nayak K."/>
            <person name="Sun Z."/>
            <person name="Lin Y.C."/>
            <person name="Comb D.G."/>
            <person name="Marks K."/>
            <person name="Gonzalez R."/>
            <person name="Dowling D.P."/>
            <person name="Bandarian V."/>
            <person name="Saleh L."/>
            <person name="Correa I.R."/>
            <person name="Weigele P.R."/>
        </authorList>
    </citation>
    <scope>FUNCTION</scope>
    <scope>CATALYTIC ACTIVITY</scope>
</reference>
<proteinExistence type="evidence at protein level"/>
<organismHost>
    <name type="scientific">Salmonella typhi</name>
    <dbReference type="NCBI Taxonomy" id="90370"/>
</organismHost>
<evidence type="ECO:0000256" key="1">
    <source>
        <dbReference type="SAM" id="MobiDB-lite"/>
    </source>
</evidence>
<evidence type="ECO:0000269" key="2">
    <source>
    </source>
</evidence>
<evidence type="ECO:0000269" key="3">
    <source>
    </source>
</evidence>
<evidence type="ECO:0000303" key="4">
    <source>
    </source>
</evidence>
<evidence type="ECO:0000305" key="5"/>
<evidence type="ECO:0000312" key="6">
    <source>
        <dbReference type="EMBL" id="CBW38062.1"/>
    </source>
</evidence>
<organism>
    <name type="scientific">Salmonella phage ViI</name>
    <dbReference type="NCBI Taxonomy" id="1987993"/>
    <lineage>
        <taxon>Viruses</taxon>
        <taxon>Duplodnaviria</taxon>
        <taxon>Heunggongvirae</taxon>
        <taxon>Uroviricota</taxon>
        <taxon>Caudoviricetes</taxon>
        <taxon>Ackermannviridae</taxon>
        <taxon>Cvivirinae</taxon>
        <taxon>Kuttervirus</taxon>
    </lineage>
</organism>
<accession>E1XTK3</accession>
<protein>
    <recommendedName>
        <fullName evidence="4">5-hmdU DNA kinase 2</fullName>
    </recommendedName>
    <alternativeName>
        <fullName evidence="4">5-hydroxymethyluracil DNA kinase</fullName>
    </alternativeName>
    <alternativeName>
        <fullName evidence="4">P-loop kinase</fullName>
    </alternativeName>
    <alternativeName>
        <fullName evidence="4">gp243</fullName>
    </alternativeName>
</protein>
<gene>
    <name evidence="6" type="ORF">Vi01_196</name>
</gene>
<keyword id="KW-0945">Host-virus interaction</keyword>
<keyword id="KW-1090">Inhibition of host innate immune response by virus</keyword>
<keyword id="KW-1185">Reference proteome</keyword>
<keyword id="KW-1258">Restriction-modification system evasion by virus</keyword>
<keyword id="KW-0899">Viral immunoevasion</keyword>
<sequence>MAKIIVIKGTSGTGKGTRVVQFIEWLRTKLKPTELSYTVGDKTRPFGLKFEELKLIFVGQYTVSNKSGLASWTSMDAIHAATGSGDIARDLVKGWLAQGYTLVCEGEPLMLSDKWRPEWMFKNYPIDSLALLYFAYPDRYQYDARIRGRSGKEAGDSGWSRNESYSKEFEKSKAEMLALGWNVAVDDYSGQDVLYHQTATNTQEFKTGNDSELAMLPFDAPLWVVGNAIYHQLGTVCRANNLMSKDFYGYCETNPMTREVGGQDPLAHRVPEKPQKASKTKNKAVAKEEPKTSSVSLLGLMRKA</sequence>
<feature type="chain" id="PRO_0000456269" description="5-hmdU DNA kinase 2">
    <location>
        <begin position="1"/>
        <end position="304"/>
    </location>
</feature>
<feature type="region of interest" description="Disordered" evidence="1">
    <location>
        <begin position="260"/>
        <end position="304"/>
    </location>
</feature>
<feature type="compositionally biased region" description="Basic and acidic residues" evidence="1">
    <location>
        <begin position="266"/>
        <end position="275"/>
    </location>
</feature>
<comment type="function">
    <text evidence="2 3">Phosphorylates 5-hydroxymethyluracil (5hmdU) into 5-phosphomethyl-2'-deoxyuridine (5- PmdU) on DNA as a step in the pathway leading to thymidine hypermodifications in the viral genome (PubMed:34522950). The phosphate is added internally to the DNA polymer (PubMed:34522950). As a final result of the pathway of hypermodification, 5-aminoethoxy-2'-deoxymethyluridine (5-NeOmdU) substitutes for about 40% of the thymidines in the viral DNA (PubMed:29555775, PubMed:34522950). These modifications probably prevent degradation of viral genome by the host restriction-modification antiviral defense system (PubMed:34522950).</text>
</comment>
<comment type="catalytic activity">
    <reaction evidence="3">
        <text>5-hydroxymethyl-dUMP in DNA + ATP = 5-phosphomethyl-dUMP in DNA + ADP + H(+)</text>
        <dbReference type="Rhea" id="RHEA:71543"/>
        <dbReference type="Rhea" id="RHEA-COMP:18039"/>
        <dbReference type="Rhea" id="RHEA-COMP:18041"/>
        <dbReference type="ChEBI" id="CHEBI:15378"/>
        <dbReference type="ChEBI" id="CHEBI:30616"/>
        <dbReference type="ChEBI" id="CHEBI:190917"/>
        <dbReference type="ChEBI" id="CHEBI:190918"/>
        <dbReference type="ChEBI" id="CHEBI:456216"/>
    </reaction>
</comment>
<comment type="similarity">
    <text evidence="5">Belongs to the thymidylate kinase family. 5-hmdU DNA kinase subfamily.</text>
</comment>